<organism>
    <name type="scientific">Yersinia pestis bv. Antiqua (strain Nepal516)</name>
    <dbReference type="NCBI Taxonomy" id="377628"/>
    <lineage>
        <taxon>Bacteria</taxon>
        <taxon>Pseudomonadati</taxon>
        <taxon>Pseudomonadota</taxon>
        <taxon>Gammaproteobacteria</taxon>
        <taxon>Enterobacterales</taxon>
        <taxon>Yersiniaceae</taxon>
        <taxon>Yersinia</taxon>
    </lineage>
</organism>
<evidence type="ECO:0000255" key="1">
    <source>
        <dbReference type="HAMAP-Rule" id="MF_01690"/>
    </source>
</evidence>
<feature type="chain" id="PRO_0000375798" description="Succinyl-diaminopimelate desuccinylase">
    <location>
        <begin position="1"/>
        <end position="375"/>
    </location>
</feature>
<feature type="active site" evidence="1">
    <location>
        <position position="68"/>
    </location>
</feature>
<feature type="active site" description="Proton acceptor" evidence="1">
    <location>
        <position position="133"/>
    </location>
</feature>
<feature type="binding site" evidence="1">
    <location>
        <position position="66"/>
    </location>
    <ligand>
        <name>Zn(2+)</name>
        <dbReference type="ChEBI" id="CHEBI:29105"/>
        <label>1</label>
    </ligand>
</feature>
<feature type="binding site" evidence="1">
    <location>
        <position position="99"/>
    </location>
    <ligand>
        <name>Zn(2+)</name>
        <dbReference type="ChEBI" id="CHEBI:29105"/>
        <label>1</label>
    </ligand>
</feature>
<feature type="binding site" evidence="1">
    <location>
        <position position="99"/>
    </location>
    <ligand>
        <name>Zn(2+)</name>
        <dbReference type="ChEBI" id="CHEBI:29105"/>
        <label>2</label>
    </ligand>
</feature>
<feature type="binding site" evidence="1">
    <location>
        <position position="134"/>
    </location>
    <ligand>
        <name>Zn(2+)</name>
        <dbReference type="ChEBI" id="CHEBI:29105"/>
        <label>2</label>
    </ligand>
</feature>
<feature type="binding site" evidence="1">
    <location>
        <position position="162"/>
    </location>
    <ligand>
        <name>Zn(2+)</name>
        <dbReference type="ChEBI" id="CHEBI:29105"/>
        <label>1</label>
    </ligand>
</feature>
<feature type="binding site" evidence="1">
    <location>
        <position position="348"/>
    </location>
    <ligand>
        <name>Zn(2+)</name>
        <dbReference type="ChEBI" id="CHEBI:29105"/>
        <label>2</label>
    </ligand>
</feature>
<gene>
    <name evidence="1" type="primary">dapE</name>
    <name type="ordered locus">YPN_1332</name>
    <name type="ORF">YP516_1466</name>
</gene>
<name>DAPE_YERPN</name>
<keyword id="KW-0028">Amino-acid biosynthesis</keyword>
<keyword id="KW-0170">Cobalt</keyword>
<keyword id="KW-0220">Diaminopimelate biosynthesis</keyword>
<keyword id="KW-0378">Hydrolase</keyword>
<keyword id="KW-0457">Lysine biosynthesis</keyword>
<keyword id="KW-0479">Metal-binding</keyword>
<keyword id="KW-0862">Zinc</keyword>
<proteinExistence type="inferred from homology"/>
<reference key="1">
    <citation type="journal article" date="2006" name="J. Bacteriol.">
        <title>Complete genome sequence of Yersinia pestis strains Antiqua and Nepal516: evidence of gene reduction in an emerging pathogen.</title>
        <authorList>
            <person name="Chain P.S.G."/>
            <person name="Hu P."/>
            <person name="Malfatti S.A."/>
            <person name="Radnedge L."/>
            <person name="Larimer F."/>
            <person name="Vergez L.M."/>
            <person name="Worsham P."/>
            <person name="Chu M.C."/>
            <person name="Andersen G.L."/>
        </authorList>
    </citation>
    <scope>NUCLEOTIDE SEQUENCE [LARGE SCALE GENOMIC DNA]</scope>
    <source>
        <strain>Nepal516</strain>
    </source>
</reference>
<reference key="2">
    <citation type="submission" date="2009-04" db="EMBL/GenBank/DDBJ databases">
        <title>Yersinia pestis Nepal516A whole genome shotgun sequencing project.</title>
        <authorList>
            <person name="Plunkett G. III"/>
            <person name="Anderson B.D."/>
            <person name="Baumler D.J."/>
            <person name="Burland V."/>
            <person name="Cabot E.L."/>
            <person name="Glasner J.D."/>
            <person name="Mau B."/>
            <person name="Neeno-Eckwall E."/>
            <person name="Perna N.T."/>
            <person name="Munk A.C."/>
            <person name="Tapia R."/>
            <person name="Green L.D."/>
            <person name="Rogers Y.C."/>
            <person name="Detter J.C."/>
            <person name="Bruce D.C."/>
            <person name="Brettin T.S."/>
        </authorList>
    </citation>
    <scope>NUCLEOTIDE SEQUENCE [LARGE SCALE GENOMIC DNA]</scope>
    <source>
        <strain>Nepal516</strain>
    </source>
</reference>
<dbReference type="EC" id="3.5.1.18" evidence="1"/>
<dbReference type="EMBL" id="CP000305">
    <property type="protein sequence ID" value="ABG17662.1"/>
    <property type="molecule type" value="Genomic_DNA"/>
</dbReference>
<dbReference type="EMBL" id="ACNQ01000008">
    <property type="protein sequence ID" value="EEO77779.1"/>
    <property type="molecule type" value="Genomic_DNA"/>
</dbReference>
<dbReference type="RefSeq" id="WP_002208549.1">
    <property type="nucleotide sequence ID" value="NZ_ACNQ01000008.1"/>
</dbReference>
<dbReference type="SMR" id="Q1CK18"/>
<dbReference type="GeneID" id="57975649"/>
<dbReference type="KEGG" id="ypn:YPN_1332"/>
<dbReference type="HOGENOM" id="CLU_021802_4_0_6"/>
<dbReference type="UniPathway" id="UPA00034">
    <property type="reaction ID" value="UER00021"/>
</dbReference>
<dbReference type="Proteomes" id="UP000008936">
    <property type="component" value="Chromosome"/>
</dbReference>
<dbReference type="GO" id="GO:0008777">
    <property type="term" value="F:acetylornithine deacetylase activity"/>
    <property type="evidence" value="ECO:0007669"/>
    <property type="project" value="TreeGrafter"/>
</dbReference>
<dbReference type="GO" id="GO:0050897">
    <property type="term" value="F:cobalt ion binding"/>
    <property type="evidence" value="ECO:0007669"/>
    <property type="project" value="UniProtKB-UniRule"/>
</dbReference>
<dbReference type="GO" id="GO:0009014">
    <property type="term" value="F:succinyl-diaminopimelate desuccinylase activity"/>
    <property type="evidence" value="ECO:0007669"/>
    <property type="project" value="UniProtKB-UniRule"/>
</dbReference>
<dbReference type="GO" id="GO:0008270">
    <property type="term" value="F:zinc ion binding"/>
    <property type="evidence" value="ECO:0007669"/>
    <property type="project" value="UniProtKB-UniRule"/>
</dbReference>
<dbReference type="GO" id="GO:0019877">
    <property type="term" value="P:diaminopimelate biosynthetic process"/>
    <property type="evidence" value="ECO:0007669"/>
    <property type="project" value="UniProtKB-UniRule"/>
</dbReference>
<dbReference type="GO" id="GO:0006526">
    <property type="term" value="P:L-arginine biosynthetic process"/>
    <property type="evidence" value="ECO:0007669"/>
    <property type="project" value="TreeGrafter"/>
</dbReference>
<dbReference type="GO" id="GO:0009089">
    <property type="term" value="P:lysine biosynthetic process via diaminopimelate"/>
    <property type="evidence" value="ECO:0007669"/>
    <property type="project" value="UniProtKB-UniRule"/>
</dbReference>
<dbReference type="CDD" id="cd03891">
    <property type="entry name" value="M20_DapE_proteobac"/>
    <property type="match status" value="1"/>
</dbReference>
<dbReference type="FunFam" id="3.30.70.360:FF:000011">
    <property type="entry name" value="Succinyl-diaminopimelate desuccinylase"/>
    <property type="match status" value="1"/>
</dbReference>
<dbReference type="FunFam" id="3.40.630.10:FF:000005">
    <property type="entry name" value="Succinyl-diaminopimelate desuccinylase"/>
    <property type="match status" value="1"/>
</dbReference>
<dbReference type="FunFam" id="3.40.630.10:FF:000010">
    <property type="entry name" value="Succinyl-diaminopimelate desuccinylase"/>
    <property type="match status" value="1"/>
</dbReference>
<dbReference type="Gene3D" id="3.40.630.10">
    <property type="entry name" value="Zn peptidases"/>
    <property type="match status" value="2"/>
</dbReference>
<dbReference type="HAMAP" id="MF_01690">
    <property type="entry name" value="DapE"/>
    <property type="match status" value="1"/>
</dbReference>
<dbReference type="InterPro" id="IPR001261">
    <property type="entry name" value="ArgE/DapE_CS"/>
</dbReference>
<dbReference type="InterPro" id="IPR036264">
    <property type="entry name" value="Bact_exopeptidase_dim_dom"/>
</dbReference>
<dbReference type="InterPro" id="IPR005941">
    <property type="entry name" value="DapE_proteobac"/>
</dbReference>
<dbReference type="InterPro" id="IPR002933">
    <property type="entry name" value="Peptidase_M20"/>
</dbReference>
<dbReference type="InterPro" id="IPR011650">
    <property type="entry name" value="Peptidase_M20_dimer"/>
</dbReference>
<dbReference type="InterPro" id="IPR050072">
    <property type="entry name" value="Peptidase_M20A"/>
</dbReference>
<dbReference type="NCBIfam" id="TIGR01246">
    <property type="entry name" value="dapE_proteo"/>
    <property type="match status" value="1"/>
</dbReference>
<dbReference type="NCBIfam" id="NF009557">
    <property type="entry name" value="PRK13009.1"/>
    <property type="match status" value="1"/>
</dbReference>
<dbReference type="PANTHER" id="PTHR43808">
    <property type="entry name" value="ACETYLORNITHINE DEACETYLASE"/>
    <property type="match status" value="1"/>
</dbReference>
<dbReference type="PANTHER" id="PTHR43808:SF31">
    <property type="entry name" value="N-ACETYL-L-CITRULLINE DEACETYLASE"/>
    <property type="match status" value="1"/>
</dbReference>
<dbReference type="Pfam" id="PF07687">
    <property type="entry name" value="M20_dimer"/>
    <property type="match status" value="1"/>
</dbReference>
<dbReference type="Pfam" id="PF01546">
    <property type="entry name" value="Peptidase_M20"/>
    <property type="match status" value="1"/>
</dbReference>
<dbReference type="SUPFAM" id="SSF55031">
    <property type="entry name" value="Bacterial exopeptidase dimerisation domain"/>
    <property type="match status" value="1"/>
</dbReference>
<dbReference type="SUPFAM" id="SSF53187">
    <property type="entry name" value="Zn-dependent exopeptidases"/>
    <property type="match status" value="1"/>
</dbReference>
<dbReference type="PROSITE" id="PS00758">
    <property type="entry name" value="ARGE_DAPE_CPG2_1"/>
    <property type="match status" value="1"/>
</dbReference>
<comment type="function">
    <text evidence="1">Catalyzes the hydrolysis of N-succinyl-L,L-diaminopimelic acid (SDAP), forming succinate and LL-2,6-diaminopimelate (DAP), an intermediate involved in the bacterial biosynthesis of lysine and meso-diaminopimelic acid, an essential component of bacterial cell walls.</text>
</comment>
<comment type="catalytic activity">
    <reaction evidence="1">
        <text>N-succinyl-(2S,6S)-2,6-diaminopimelate + H2O = (2S,6S)-2,6-diaminopimelate + succinate</text>
        <dbReference type="Rhea" id="RHEA:22608"/>
        <dbReference type="ChEBI" id="CHEBI:15377"/>
        <dbReference type="ChEBI" id="CHEBI:30031"/>
        <dbReference type="ChEBI" id="CHEBI:57609"/>
        <dbReference type="ChEBI" id="CHEBI:58087"/>
        <dbReference type="EC" id="3.5.1.18"/>
    </reaction>
</comment>
<comment type="cofactor">
    <cofactor evidence="1">
        <name>Zn(2+)</name>
        <dbReference type="ChEBI" id="CHEBI:29105"/>
    </cofactor>
    <cofactor evidence="1">
        <name>Co(2+)</name>
        <dbReference type="ChEBI" id="CHEBI:48828"/>
    </cofactor>
    <text evidence="1">Binds 2 Zn(2+) or Co(2+) ions per subunit.</text>
</comment>
<comment type="pathway">
    <text evidence="1">Amino-acid biosynthesis; L-lysine biosynthesis via DAP pathway; LL-2,6-diaminopimelate from (S)-tetrahydrodipicolinate (succinylase route): step 3/3.</text>
</comment>
<comment type="subunit">
    <text evidence="1">Homodimer.</text>
</comment>
<comment type="similarity">
    <text evidence="1">Belongs to the peptidase M20A family. DapE subfamily.</text>
</comment>
<protein>
    <recommendedName>
        <fullName evidence="1">Succinyl-diaminopimelate desuccinylase</fullName>
        <shortName evidence="1">SDAP desuccinylase</shortName>
        <ecNumber evidence="1">3.5.1.18</ecNumber>
    </recommendedName>
    <alternativeName>
        <fullName evidence="1">N-succinyl-LL-2,6-diaminoheptanedioate amidohydrolase</fullName>
    </alternativeName>
</protein>
<sequence length="375" mass="40933">MICPVIELAQQLIKRPSLSPSDAGCQEIMIQRLAAIGFTIEPMNFGDTLNFWAWRGEGETLAFAGHTDVVPTGDESHWHSPPFEPTIRDGMLYGRGAADMKGSLAAMIVAAERFVAAHPDHKGRLAFMITSDEEAKATNGTVKVVEALMARHERLDYCLVGEPSSTDRVGDIVKNGRRGSITANLRIHGVQGHVAYPHLADNPVHRAMPALNELVATQWDEGNAFFPATSMQIANLQAGTGSNNVIPGEFYVQFNFRFSTELTDSLIKQRVAALLDRHQLDYTLEWVLSGQPFLTAKGALVDAVVNAVKHYTEITPQLLTTGGTSDGRFIALMGAQVVELGPVNATIHKVNECVSAADLQLLSRMYQKIMEQLIA</sequence>
<accession>Q1CK18</accession>
<accession>C4GRT8</accession>